<comment type="function">
    <text evidence="1">Involved in the biosynthesis of isopentenyl diphosphate (IPP) and dimethylallyl diphosphate (DMAPP), two major building blocks of isoprenoid compounds. Catalyzes the conversion of 4-diphosphocytidyl-2-C-methyl-D-erythritol 2-phosphate (CDP-ME2P) to 2-C-methyl-D-erythritol 2,4-cyclodiphosphate (ME-CPP) with a corresponding release of cytidine 5-monophosphate (CMP).</text>
</comment>
<comment type="catalytic activity">
    <reaction evidence="1">
        <text>4-CDP-2-C-methyl-D-erythritol 2-phosphate = 2-C-methyl-D-erythritol 2,4-cyclic diphosphate + CMP</text>
        <dbReference type="Rhea" id="RHEA:23864"/>
        <dbReference type="ChEBI" id="CHEBI:57919"/>
        <dbReference type="ChEBI" id="CHEBI:58483"/>
        <dbReference type="ChEBI" id="CHEBI:60377"/>
        <dbReference type="EC" id="4.6.1.12"/>
    </reaction>
</comment>
<comment type="cofactor">
    <cofactor evidence="1">
        <name>a divalent metal cation</name>
        <dbReference type="ChEBI" id="CHEBI:60240"/>
    </cofactor>
    <text evidence="1">Binds 1 divalent metal cation per subunit.</text>
</comment>
<comment type="pathway">
    <text evidence="1">Isoprenoid biosynthesis; isopentenyl diphosphate biosynthesis via DXP pathway; isopentenyl diphosphate from 1-deoxy-D-xylulose 5-phosphate: step 4/6.</text>
</comment>
<comment type="subunit">
    <text evidence="1">Homotrimer.</text>
</comment>
<comment type="similarity">
    <text evidence="1">Belongs to the IspF family.</text>
</comment>
<evidence type="ECO:0000255" key="1">
    <source>
        <dbReference type="HAMAP-Rule" id="MF_00107"/>
    </source>
</evidence>
<protein>
    <recommendedName>
        <fullName evidence="1">2-C-methyl-D-erythritol 2,4-cyclodiphosphate synthase</fullName>
        <shortName evidence="1">MECDP-synthase</shortName>
        <shortName evidence="1">MECPP-synthase</shortName>
        <shortName evidence="1">MECPS</shortName>
        <ecNumber evidence="1">4.6.1.12</ecNumber>
    </recommendedName>
</protein>
<keyword id="KW-0414">Isoprene biosynthesis</keyword>
<keyword id="KW-0456">Lyase</keyword>
<keyword id="KW-0479">Metal-binding</keyword>
<keyword id="KW-1185">Reference proteome</keyword>
<reference key="1">
    <citation type="journal article" date="2006" name="Nat. Biotechnol.">
        <title>Complete genome of the mutualistic, N2-fixing grass endophyte Azoarcus sp. strain BH72.</title>
        <authorList>
            <person name="Krause A."/>
            <person name="Ramakumar A."/>
            <person name="Bartels D."/>
            <person name="Battistoni F."/>
            <person name="Bekel T."/>
            <person name="Boch J."/>
            <person name="Boehm M."/>
            <person name="Friedrich F."/>
            <person name="Hurek T."/>
            <person name="Krause L."/>
            <person name="Linke B."/>
            <person name="McHardy A.C."/>
            <person name="Sarkar A."/>
            <person name="Schneiker S."/>
            <person name="Syed A.A."/>
            <person name="Thauer R."/>
            <person name="Vorhoelter F.-J."/>
            <person name="Weidner S."/>
            <person name="Puehler A."/>
            <person name="Reinhold-Hurek B."/>
            <person name="Kaiser O."/>
            <person name="Goesmann A."/>
        </authorList>
    </citation>
    <scope>NUCLEOTIDE SEQUENCE [LARGE SCALE GENOMIC DNA]</scope>
    <source>
        <strain>BH72</strain>
    </source>
</reference>
<proteinExistence type="inferred from homology"/>
<sequence length="162" mass="16620">MKCPFRVGQGFDVHALVPGRALIVGGVDIPFSAGLLGHSDADVLLHALTDALLGAAGLGDIGRLFPDTDPAHAGADSRVLLREAYARVKAAGWEAVNVDATLICRAPRILPHAPAMVVNIAADLGMDAAAINIKGKTTEKLGFTGRGEGIAAQVVALLARAD</sequence>
<gene>
    <name evidence="1" type="primary">ispF</name>
    <name type="ordered locus">azo1683</name>
</gene>
<name>ISPF_AZOSB</name>
<accession>A1K645</accession>
<dbReference type="EC" id="4.6.1.12" evidence="1"/>
<dbReference type="EMBL" id="AM406670">
    <property type="protein sequence ID" value="CAL94300.1"/>
    <property type="molecule type" value="Genomic_DNA"/>
</dbReference>
<dbReference type="RefSeq" id="WP_011765416.1">
    <property type="nucleotide sequence ID" value="NC_008702.1"/>
</dbReference>
<dbReference type="SMR" id="A1K645"/>
<dbReference type="STRING" id="62928.azo1683"/>
<dbReference type="KEGG" id="azo:azo1683"/>
<dbReference type="eggNOG" id="COG0245">
    <property type="taxonomic scope" value="Bacteria"/>
</dbReference>
<dbReference type="HOGENOM" id="CLU_084630_2_0_4"/>
<dbReference type="UniPathway" id="UPA00056">
    <property type="reaction ID" value="UER00095"/>
</dbReference>
<dbReference type="Proteomes" id="UP000002588">
    <property type="component" value="Chromosome"/>
</dbReference>
<dbReference type="GO" id="GO:0008685">
    <property type="term" value="F:2-C-methyl-D-erythritol 2,4-cyclodiphosphate synthase activity"/>
    <property type="evidence" value="ECO:0007669"/>
    <property type="project" value="UniProtKB-UniRule"/>
</dbReference>
<dbReference type="GO" id="GO:0046872">
    <property type="term" value="F:metal ion binding"/>
    <property type="evidence" value="ECO:0007669"/>
    <property type="project" value="UniProtKB-KW"/>
</dbReference>
<dbReference type="GO" id="GO:0019288">
    <property type="term" value="P:isopentenyl diphosphate biosynthetic process, methylerythritol 4-phosphate pathway"/>
    <property type="evidence" value="ECO:0007669"/>
    <property type="project" value="UniProtKB-UniRule"/>
</dbReference>
<dbReference type="GO" id="GO:0016114">
    <property type="term" value="P:terpenoid biosynthetic process"/>
    <property type="evidence" value="ECO:0007669"/>
    <property type="project" value="InterPro"/>
</dbReference>
<dbReference type="CDD" id="cd00554">
    <property type="entry name" value="MECDP_synthase"/>
    <property type="match status" value="1"/>
</dbReference>
<dbReference type="FunFam" id="3.30.1330.50:FF:000001">
    <property type="entry name" value="2-C-methyl-D-erythritol 2,4-cyclodiphosphate synthase"/>
    <property type="match status" value="1"/>
</dbReference>
<dbReference type="Gene3D" id="3.30.1330.50">
    <property type="entry name" value="2-C-methyl-D-erythritol 2,4-cyclodiphosphate synthase"/>
    <property type="match status" value="1"/>
</dbReference>
<dbReference type="HAMAP" id="MF_00107">
    <property type="entry name" value="IspF"/>
    <property type="match status" value="1"/>
</dbReference>
<dbReference type="InterPro" id="IPR003526">
    <property type="entry name" value="MECDP_synthase"/>
</dbReference>
<dbReference type="InterPro" id="IPR020555">
    <property type="entry name" value="MECDP_synthase_CS"/>
</dbReference>
<dbReference type="InterPro" id="IPR036571">
    <property type="entry name" value="MECDP_synthase_sf"/>
</dbReference>
<dbReference type="NCBIfam" id="TIGR00151">
    <property type="entry name" value="ispF"/>
    <property type="match status" value="1"/>
</dbReference>
<dbReference type="PANTHER" id="PTHR43181">
    <property type="entry name" value="2-C-METHYL-D-ERYTHRITOL 2,4-CYCLODIPHOSPHATE SYNTHASE, CHLOROPLASTIC"/>
    <property type="match status" value="1"/>
</dbReference>
<dbReference type="PANTHER" id="PTHR43181:SF1">
    <property type="entry name" value="2-C-METHYL-D-ERYTHRITOL 2,4-CYCLODIPHOSPHATE SYNTHASE, CHLOROPLASTIC"/>
    <property type="match status" value="1"/>
</dbReference>
<dbReference type="Pfam" id="PF02542">
    <property type="entry name" value="YgbB"/>
    <property type="match status" value="1"/>
</dbReference>
<dbReference type="SUPFAM" id="SSF69765">
    <property type="entry name" value="IpsF-like"/>
    <property type="match status" value="1"/>
</dbReference>
<dbReference type="PROSITE" id="PS01350">
    <property type="entry name" value="ISPF"/>
    <property type="match status" value="1"/>
</dbReference>
<feature type="chain" id="PRO_1000022805" description="2-C-methyl-D-erythritol 2,4-cyclodiphosphate synthase">
    <location>
        <begin position="1"/>
        <end position="162"/>
    </location>
</feature>
<feature type="binding site" evidence="1">
    <location>
        <begin position="12"/>
        <end position="14"/>
    </location>
    <ligand>
        <name>4-CDP-2-C-methyl-D-erythritol 2-phosphate</name>
        <dbReference type="ChEBI" id="CHEBI:57919"/>
    </ligand>
</feature>
<feature type="binding site" evidence="1">
    <location>
        <position position="12"/>
    </location>
    <ligand>
        <name>a divalent metal cation</name>
        <dbReference type="ChEBI" id="CHEBI:60240"/>
    </ligand>
</feature>
<feature type="binding site" evidence="1">
    <location>
        <position position="14"/>
    </location>
    <ligand>
        <name>a divalent metal cation</name>
        <dbReference type="ChEBI" id="CHEBI:60240"/>
    </ligand>
</feature>
<feature type="binding site" evidence="1">
    <location>
        <begin position="38"/>
        <end position="39"/>
    </location>
    <ligand>
        <name>4-CDP-2-C-methyl-D-erythritol 2-phosphate</name>
        <dbReference type="ChEBI" id="CHEBI:57919"/>
    </ligand>
</feature>
<feature type="binding site" evidence="1">
    <location>
        <position position="46"/>
    </location>
    <ligand>
        <name>a divalent metal cation</name>
        <dbReference type="ChEBI" id="CHEBI:60240"/>
    </ligand>
</feature>
<feature type="binding site" evidence="1">
    <location>
        <begin position="60"/>
        <end position="62"/>
    </location>
    <ligand>
        <name>4-CDP-2-C-methyl-D-erythritol 2-phosphate</name>
        <dbReference type="ChEBI" id="CHEBI:57919"/>
    </ligand>
</feature>
<feature type="binding site" evidence="1">
    <location>
        <begin position="65"/>
        <end position="69"/>
    </location>
    <ligand>
        <name>4-CDP-2-C-methyl-D-erythritol 2-phosphate</name>
        <dbReference type="ChEBI" id="CHEBI:57919"/>
    </ligand>
</feature>
<feature type="binding site" evidence="1">
    <location>
        <position position="143"/>
    </location>
    <ligand>
        <name>4-CDP-2-C-methyl-D-erythritol 2-phosphate</name>
        <dbReference type="ChEBI" id="CHEBI:57919"/>
    </ligand>
</feature>
<feature type="binding site" evidence="1">
    <location>
        <position position="146"/>
    </location>
    <ligand>
        <name>4-CDP-2-C-methyl-D-erythritol 2-phosphate</name>
        <dbReference type="ChEBI" id="CHEBI:57919"/>
    </ligand>
</feature>
<feature type="site" description="Transition state stabilizer" evidence="1">
    <location>
        <position position="38"/>
    </location>
</feature>
<feature type="site" description="Transition state stabilizer" evidence="1">
    <location>
        <position position="137"/>
    </location>
</feature>
<organism>
    <name type="scientific">Azoarcus sp. (strain BH72)</name>
    <dbReference type="NCBI Taxonomy" id="418699"/>
    <lineage>
        <taxon>Bacteria</taxon>
        <taxon>Pseudomonadati</taxon>
        <taxon>Pseudomonadota</taxon>
        <taxon>Betaproteobacteria</taxon>
        <taxon>Rhodocyclales</taxon>
        <taxon>Zoogloeaceae</taxon>
        <taxon>Azoarcus</taxon>
    </lineage>
</organism>